<evidence type="ECO:0000250" key="1">
    <source>
        <dbReference type="UniProtKB" id="Q3TLI0"/>
    </source>
</evidence>
<evidence type="ECO:0000256" key="2">
    <source>
        <dbReference type="SAM" id="MobiDB-lite"/>
    </source>
</evidence>
<evidence type="ECO:0000269" key="3">
    <source>
    </source>
</evidence>
<evidence type="ECO:0000269" key="4">
    <source>
    </source>
</evidence>
<evidence type="ECO:0000269" key="5">
    <source>
    </source>
</evidence>
<evidence type="ECO:0000303" key="6">
    <source>
    </source>
</evidence>
<evidence type="ECO:0000303" key="7">
    <source>
    </source>
</evidence>
<evidence type="ECO:0000303" key="8">
    <source>
    </source>
</evidence>
<evidence type="ECO:0000305" key="9"/>
<evidence type="ECO:0000312" key="10">
    <source>
        <dbReference type="HGNC" id="HGNC:25604"/>
    </source>
</evidence>
<evidence type="ECO:0007744" key="11">
    <source>
    </source>
</evidence>
<evidence type="ECO:0007744" key="12">
    <source>
    </source>
</evidence>
<gene>
    <name evidence="10" type="primary">TRAPPC14</name>
    <name evidence="10" type="synonym">C7orf43</name>
    <name evidence="8" type="synonym">MAP11</name>
</gene>
<sequence>MESQCDYSMYFPAVPLPPRAELAGDPGRYRALPRRNHLYLGETVRFLLVLRCRGGAGSGTGGGPGLGSRGAWAELATALAALASVSAGGGMPGGGGAGDQDSEPPGGGDPGGGGLFRGCSPLLTHGPGPATSGGATTLPVEEPIVSTDEVIFPLTVSLDRLPPGTPKAKIVVTVWKREIEAPEVRDQGYLRLLQTRSPGETFRGEQSAFKAQVSTLLTLLPPPVLRCRQFTVAGKHLTVLKVLNSSSQEEISIWDIRILPNFNASYLPVMPDGSVLLVDNVCHQSGEVSMGSFCRLPGTSGCFPCPLNALEEHNFLFQLRGGEQPPPGAKEGLEVPLIAVVQWSTPKLPFTQSIYTHYRLPSVRLDRPCFVMTASCKSPVRTYERFTVTYTLLNNLQDFLAVRLVWTPEHAQAGKQLCEEERRAMQAALDSVVCHTPLNNLGFSRKGSALTFSVAFQALRTGLFELSQHMKLKLQFTASVSHPPPEARPLSRKSSPSSPAVRDLVERHQASLGRSQSFSHQQPSRSHLMRSGSVMERRAITPPVASPVGRPLYLPPDKAVLSLDKIAKRECKVLVVEPVK</sequence>
<accession>Q8WVR3</accession>
<accession>A4D2A9</accession>
<accession>D6W5U4</accession>
<accession>Q9BQJ1</accession>
<accession>Q9BUB6</accession>
<accession>Q9NV47</accession>
<reference key="1">
    <citation type="journal article" date="2001" name="Genome Res.">
        <title>Towards a catalog of human genes and proteins: sequencing and analysis of 500 novel complete protein coding human cDNAs.</title>
        <authorList>
            <person name="Wiemann S."/>
            <person name="Weil B."/>
            <person name="Wellenreuther R."/>
            <person name="Gassenhuber J."/>
            <person name="Glassl S."/>
            <person name="Ansorge W."/>
            <person name="Boecher M."/>
            <person name="Bloecker H."/>
            <person name="Bauersachs S."/>
            <person name="Blum H."/>
            <person name="Lauber J."/>
            <person name="Duesterhoeft A."/>
            <person name="Beyer A."/>
            <person name="Koehrer K."/>
            <person name="Strack N."/>
            <person name="Mewes H.-W."/>
            <person name="Ottenwaelder B."/>
            <person name="Obermaier B."/>
            <person name="Tampe J."/>
            <person name="Heubner D."/>
            <person name="Wambutt R."/>
            <person name="Korn B."/>
            <person name="Klein M."/>
            <person name="Poustka A."/>
        </authorList>
    </citation>
    <scope>NUCLEOTIDE SEQUENCE [LARGE SCALE MRNA] (ISOFORM 3)</scope>
    <source>
        <tissue>Amygdala</tissue>
    </source>
</reference>
<reference key="2">
    <citation type="journal article" date="2004" name="Nat. Genet.">
        <title>Complete sequencing and characterization of 21,243 full-length human cDNAs.</title>
        <authorList>
            <person name="Ota T."/>
            <person name="Suzuki Y."/>
            <person name="Nishikawa T."/>
            <person name="Otsuki T."/>
            <person name="Sugiyama T."/>
            <person name="Irie R."/>
            <person name="Wakamatsu A."/>
            <person name="Hayashi K."/>
            <person name="Sato H."/>
            <person name="Nagai K."/>
            <person name="Kimura K."/>
            <person name="Makita H."/>
            <person name="Sekine M."/>
            <person name="Obayashi M."/>
            <person name="Nishi T."/>
            <person name="Shibahara T."/>
            <person name="Tanaka T."/>
            <person name="Ishii S."/>
            <person name="Yamamoto J."/>
            <person name="Saito K."/>
            <person name="Kawai Y."/>
            <person name="Isono Y."/>
            <person name="Nakamura Y."/>
            <person name="Nagahari K."/>
            <person name="Murakami K."/>
            <person name="Yasuda T."/>
            <person name="Iwayanagi T."/>
            <person name="Wagatsuma M."/>
            <person name="Shiratori A."/>
            <person name="Sudo H."/>
            <person name="Hosoiri T."/>
            <person name="Kaku Y."/>
            <person name="Kodaira H."/>
            <person name="Kondo H."/>
            <person name="Sugawara M."/>
            <person name="Takahashi M."/>
            <person name="Kanda K."/>
            <person name="Yokoi T."/>
            <person name="Furuya T."/>
            <person name="Kikkawa E."/>
            <person name="Omura Y."/>
            <person name="Abe K."/>
            <person name="Kamihara K."/>
            <person name="Katsuta N."/>
            <person name="Sato K."/>
            <person name="Tanikawa M."/>
            <person name="Yamazaki M."/>
            <person name="Ninomiya K."/>
            <person name="Ishibashi T."/>
            <person name="Yamashita H."/>
            <person name="Murakawa K."/>
            <person name="Fujimori K."/>
            <person name="Tanai H."/>
            <person name="Kimata M."/>
            <person name="Watanabe M."/>
            <person name="Hiraoka S."/>
            <person name="Chiba Y."/>
            <person name="Ishida S."/>
            <person name="Ono Y."/>
            <person name="Takiguchi S."/>
            <person name="Watanabe S."/>
            <person name="Yosida M."/>
            <person name="Hotuta T."/>
            <person name="Kusano J."/>
            <person name="Kanehori K."/>
            <person name="Takahashi-Fujii A."/>
            <person name="Hara H."/>
            <person name="Tanase T.-O."/>
            <person name="Nomura Y."/>
            <person name="Togiya S."/>
            <person name="Komai F."/>
            <person name="Hara R."/>
            <person name="Takeuchi K."/>
            <person name="Arita M."/>
            <person name="Imose N."/>
            <person name="Musashino K."/>
            <person name="Yuuki H."/>
            <person name="Oshima A."/>
            <person name="Sasaki N."/>
            <person name="Aotsuka S."/>
            <person name="Yoshikawa Y."/>
            <person name="Matsunawa H."/>
            <person name="Ichihara T."/>
            <person name="Shiohata N."/>
            <person name="Sano S."/>
            <person name="Moriya S."/>
            <person name="Momiyama H."/>
            <person name="Satoh N."/>
            <person name="Takami S."/>
            <person name="Terashima Y."/>
            <person name="Suzuki O."/>
            <person name="Nakagawa S."/>
            <person name="Senoh A."/>
            <person name="Mizoguchi H."/>
            <person name="Goto Y."/>
            <person name="Shimizu F."/>
            <person name="Wakebe H."/>
            <person name="Hishigaki H."/>
            <person name="Watanabe T."/>
            <person name="Sugiyama A."/>
            <person name="Takemoto M."/>
            <person name="Kawakami B."/>
            <person name="Yamazaki M."/>
            <person name="Watanabe K."/>
            <person name="Kumagai A."/>
            <person name="Itakura S."/>
            <person name="Fukuzumi Y."/>
            <person name="Fujimori Y."/>
            <person name="Komiyama M."/>
            <person name="Tashiro H."/>
            <person name="Tanigami A."/>
            <person name="Fujiwara T."/>
            <person name="Ono T."/>
            <person name="Yamada K."/>
            <person name="Fujii Y."/>
            <person name="Ozaki K."/>
            <person name="Hirao M."/>
            <person name="Ohmori Y."/>
            <person name="Kawabata A."/>
            <person name="Hikiji T."/>
            <person name="Kobatake N."/>
            <person name="Inagaki H."/>
            <person name="Ikema Y."/>
            <person name="Okamoto S."/>
            <person name="Okitani R."/>
            <person name="Kawakami T."/>
            <person name="Noguchi S."/>
            <person name="Itoh T."/>
            <person name="Shigeta K."/>
            <person name="Senba T."/>
            <person name="Matsumura K."/>
            <person name="Nakajima Y."/>
            <person name="Mizuno T."/>
            <person name="Morinaga M."/>
            <person name="Sasaki M."/>
            <person name="Togashi T."/>
            <person name="Oyama M."/>
            <person name="Hata H."/>
            <person name="Watanabe M."/>
            <person name="Komatsu T."/>
            <person name="Mizushima-Sugano J."/>
            <person name="Satoh T."/>
            <person name="Shirai Y."/>
            <person name="Takahashi Y."/>
            <person name="Nakagawa K."/>
            <person name="Okumura K."/>
            <person name="Nagase T."/>
            <person name="Nomura N."/>
            <person name="Kikuchi H."/>
            <person name="Masuho Y."/>
            <person name="Yamashita R."/>
            <person name="Nakai K."/>
            <person name="Yada T."/>
            <person name="Nakamura Y."/>
            <person name="Ohara O."/>
            <person name="Isogai T."/>
            <person name="Sugano S."/>
        </authorList>
    </citation>
    <scope>NUCLEOTIDE SEQUENCE [LARGE SCALE MRNA] (ISOFORM 2)</scope>
    <source>
        <tissue>Ovarian carcinoma</tissue>
    </source>
</reference>
<reference key="3">
    <citation type="journal article" date="2003" name="Science">
        <title>Human chromosome 7: DNA sequence and biology.</title>
        <authorList>
            <person name="Scherer S.W."/>
            <person name="Cheung J."/>
            <person name="MacDonald J.R."/>
            <person name="Osborne L.R."/>
            <person name="Nakabayashi K."/>
            <person name="Herbrick J.-A."/>
            <person name="Carson A.R."/>
            <person name="Parker-Katiraee L."/>
            <person name="Skaug J."/>
            <person name="Khaja R."/>
            <person name="Zhang J."/>
            <person name="Hudek A.K."/>
            <person name="Li M."/>
            <person name="Haddad M."/>
            <person name="Duggan G.E."/>
            <person name="Fernandez B.A."/>
            <person name="Kanematsu E."/>
            <person name="Gentles S."/>
            <person name="Christopoulos C.C."/>
            <person name="Choufani S."/>
            <person name="Kwasnicka D."/>
            <person name="Zheng X.H."/>
            <person name="Lai Z."/>
            <person name="Nusskern D.R."/>
            <person name="Zhang Q."/>
            <person name="Gu Z."/>
            <person name="Lu F."/>
            <person name="Zeesman S."/>
            <person name="Nowaczyk M.J."/>
            <person name="Teshima I."/>
            <person name="Chitayat D."/>
            <person name="Shuman C."/>
            <person name="Weksberg R."/>
            <person name="Zackai E.H."/>
            <person name="Grebe T.A."/>
            <person name="Cox S.R."/>
            <person name="Kirkpatrick S.J."/>
            <person name="Rahman N."/>
            <person name="Friedman J.M."/>
            <person name="Heng H.H.Q."/>
            <person name="Pelicci P.G."/>
            <person name="Lo-Coco F."/>
            <person name="Belloni E."/>
            <person name="Shaffer L.G."/>
            <person name="Pober B."/>
            <person name="Morton C.C."/>
            <person name="Gusella J.F."/>
            <person name="Bruns G.A.P."/>
            <person name="Korf B.R."/>
            <person name="Quade B.J."/>
            <person name="Ligon A.H."/>
            <person name="Ferguson H."/>
            <person name="Higgins A.W."/>
            <person name="Leach N.T."/>
            <person name="Herrick S.R."/>
            <person name="Lemyre E."/>
            <person name="Farra C.G."/>
            <person name="Kim H.-G."/>
            <person name="Summers A.M."/>
            <person name="Gripp K.W."/>
            <person name="Roberts W."/>
            <person name="Szatmari P."/>
            <person name="Winsor E.J.T."/>
            <person name="Grzeschik K.-H."/>
            <person name="Teebi A."/>
            <person name="Minassian B.A."/>
            <person name="Kere J."/>
            <person name="Armengol L."/>
            <person name="Pujana M.A."/>
            <person name="Estivill X."/>
            <person name="Wilson M.D."/>
            <person name="Koop B.F."/>
            <person name="Tosi S."/>
            <person name="Moore G.E."/>
            <person name="Boright A.P."/>
            <person name="Zlotorynski E."/>
            <person name="Kerem B."/>
            <person name="Kroisel P.M."/>
            <person name="Petek E."/>
            <person name="Oscier D.G."/>
            <person name="Mould S.J."/>
            <person name="Doehner H."/>
            <person name="Doehner K."/>
            <person name="Rommens J.M."/>
            <person name="Vincent J.B."/>
            <person name="Venter J.C."/>
            <person name="Li P.W."/>
            <person name="Mural R.J."/>
            <person name="Adams M.D."/>
            <person name="Tsui L.-C."/>
        </authorList>
    </citation>
    <scope>NUCLEOTIDE SEQUENCE [LARGE SCALE GENOMIC DNA]</scope>
</reference>
<reference key="4">
    <citation type="submission" date="2005-09" db="EMBL/GenBank/DDBJ databases">
        <authorList>
            <person name="Mural R.J."/>
            <person name="Istrail S."/>
            <person name="Sutton G.G."/>
            <person name="Florea L."/>
            <person name="Halpern A.L."/>
            <person name="Mobarry C.M."/>
            <person name="Lippert R."/>
            <person name="Walenz B."/>
            <person name="Shatkay H."/>
            <person name="Dew I."/>
            <person name="Miller J.R."/>
            <person name="Flanigan M.J."/>
            <person name="Edwards N.J."/>
            <person name="Bolanos R."/>
            <person name="Fasulo D."/>
            <person name="Halldorsson B.V."/>
            <person name="Hannenhalli S."/>
            <person name="Turner R."/>
            <person name="Yooseph S."/>
            <person name="Lu F."/>
            <person name="Nusskern D.R."/>
            <person name="Shue B.C."/>
            <person name="Zheng X.H."/>
            <person name="Zhong F."/>
            <person name="Delcher A.L."/>
            <person name="Huson D.H."/>
            <person name="Kravitz S.A."/>
            <person name="Mouchard L."/>
            <person name="Reinert K."/>
            <person name="Remington K.A."/>
            <person name="Clark A.G."/>
            <person name="Waterman M.S."/>
            <person name="Eichler E.E."/>
            <person name="Adams M.D."/>
            <person name="Hunkapiller M.W."/>
            <person name="Myers E.W."/>
            <person name="Venter J.C."/>
        </authorList>
    </citation>
    <scope>NUCLEOTIDE SEQUENCE [LARGE SCALE GENOMIC DNA]</scope>
</reference>
<reference key="5">
    <citation type="journal article" date="2004" name="Genome Res.">
        <title>The status, quality, and expansion of the NIH full-length cDNA project: the Mammalian Gene Collection (MGC).</title>
        <authorList>
            <consortium name="The MGC Project Team"/>
        </authorList>
    </citation>
    <scope>NUCLEOTIDE SEQUENCE [LARGE SCALE MRNA] (ISOFORM 1)</scope>
    <source>
        <tissue>Skin</tissue>
        <tissue>Uterus</tissue>
    </source>
</reference>
<reference key="6">
    <citation type="journal article" date="2008" name="Proc. Natl. Acad. Sci. U.S.A.">
        <title>A quantitative atlas of mitotic phosphorylation.</title>
        <authorList>
            <person name="Dephoure N."/>
            <person name="Zhou C."/>
            <person name="Villen J."/>
            <person name="Beausoleil S.A."/>
            <person name="Bakalarski C.E."/>
            <person name="Elledge S.J."/>
            <person name="Gygi S.P."/>
        </authorList>
    </citation>
    <scope>PHOSPHORYLATION [LARGE SCALE ANALYSIS] AT SER-517; THR-541 AND SER-546</scope>
    <scope>IDENTIFICATION BY MASS SPECTROMETRY [LARGE SCALE ANALYSIS]</scope>
    <source>
        <tissue>Cervix carcinoma</tissue>
    </source>
</reference>
<reference key="7">
    <citation type="journal article" date="2013" name="J. Proteome Res.">
        <title>Toward a comprehensive characterization of a human cancer cell phosphoproteome.</title>
        <authorList>
            <person name="Zhou H."/>
            <person name="Di Palma S."/>
            <person name="Preisinger C."/>
            <person name="Peng M."/>
            <person name="Polat A.N."/>
            <person name="Heck A.J."/>
            <person name="Mohammed S."/>
        </authorList>
    </citation>
    <scope>PHOSPHORYLATION [LARGE SCALE ANALYSIS] AT SER-491 AND SER-517</scope>
    <scope>IDENTIFICATION BY MASS SPECTROMETRY [LARGE SCALE ANALYSIS]</scope>
    <source>
        <tissue>Cervix carcinoma</tissue>
        <tissue>Erythroleukemia</tissue>
    </source>
</reference>
<reference key="8">
    <citation type="journal article" date="2014" name="J. Proteomics">
        <title>An enzyme assisted RP-RPLC approach for in-depth analysis of human liver phosphoproteome.</title>
        <authorList>
            <person name="Bian Y."/>
            <person name="Song C."/>
            <person name="Cheng K."/>
            <person name="Dong M."/>
            <person name="Wang F."/>
            <person name="Huang J."/>
            <person name="Sun D."/>
            <person name="Wang L."/>
            <person name="Ye M."/>
            <person name="Zou H."/>
        </authorList>
    </citation>
    <scope>IDENTIFICATION BY MASS SPECTROMETRY [LARGE SCALE ANALYSIS]</scope>
    <source>
        <tissue>Liver</tissue>
    </source>
</reference>
<reference key="9">
    <citation type="journal article" date="2019" name="Cancer Sci.">
        <title>Identification of genes involved in the regulation of TERT in hepatocellular carcinoma.</title>
        <authorList>
            <person name="Amisaki M."/>
            <person name="Tsuchiya H."/>
            <person name="Sakabe T."/>
            <person name="Fujiwara Y."/>
            <person name="Shiota G."/>
        </authorList>
    </citation>
    <scope>FUNCTION</scope>
</reference>
<reference key="10">
    <citation type="journal article" date="2019" name="Brain">
        <title>Mutations in the microtubule-associated protein MAP11 (C7orf43) cause microcephaly in humans and zebrafish.</title>
        <authorList>
            <person name="Perez Y."/>
            <person name="Bar-Yaacov R."/>
            <person name="Kadir R."/>
            <person name="Wormser O."/>
            <person name="Shelef I."/>
            <person name="Birk O.S."/>
            <person name="Flusser H."/>
            <person name="Birnbaum R.Y."/>
        </authorList>
    </citation>
    <scope>INVOLVEMENT IN MCPH25</scope>
    <scope>VARIANT MCPH25 205-GLU--LYS-580 DEL</scope>
    <scope>FUNCTION</scope>
    <scope>TISSUE SPECIFICITY</scope>
    <scope>SUBCELLULAR LOCATION</scope>
    <scope>INTERACTION WITH ALPHA-TUBULIN</scope>
</reference>
<reference key="11">
    <citation type="journal article" date="2019" name="J. Biol. Chem.">
        <title>The C7orf43/TRAPPC14 component links the TRAPPII complex to Rabin8 for preciliary vesicle tethering at the mother centriole during ciliogenesis.</title>
        <authorList>
            <person name="Cuenca A."/>
            <person name="Insinna C."/>
            <person name="Zhao H."/>
            <person name="John P."/>
            <person name="Weiss M.A."/>
            <person name="Lu Q."/>
            <person name="Walia V."/>
            <person name="Specht S."/>
            <person name="Manivannan S."/>
            <person name="Stauffer J."/>
            <person name="Peden A.A."/>
            <person name="Westlake C.J."/>
        </authorList>
    </citation>
    <scope>IDENTIFICATION IN THE TRAPP II COMPLEX</scope>
    <scope>INTERACTION WITH RAB3IP; TRAPPC10 AND FBF1</scope>
    <scope>SUBCELLULAR LOCATION</scope>
    <scope>FUNCTION</scope>
    <scope>SUBUNIT</scope>
</reference>
<protein>
    <recommendedName>
        <fullName>Trafficking protein particle complex subunit 14</fullName>
    </recommendedName>
    <alternativeName>
        <fullName evidence="8">Microtubule-associated protein 11</fullName>
    </alternativeName>
</protein>
<name>TPC14_HUMAN</name>
<comment type="function">
    <text evidence="1 3 4 5">Specific subunit of the TRAPP (transport protein particle) II complex, a highly conserved vesicle tethering complex that functions in late Golgi trafficking as a membrane tether (PubMed:30715179, PubMed:31467083). TRAPP II complex also has GEF activity toward RAB1A (By similarity). TRAPPC14 is dispensable for TRAPPII complex integrity but mediates RAB3IP preciliary vesicle trafficking to the mother centriole during ciliogenesis (PubMed:31467083). Modulates YAP1 activity as transcriptional regulator (PubMed:30447097).</text>
</comment>
<comment type="subunit">
    <text evidence="4 5">Component of the multisubunit TRAPP II complex, which includes at least TRAPPC1, TRAPPC2, TRAPPC2L, TRAPPC3, TRAPPC4, TRAPPC5, TRAPPC6A/B, TRAPPC9, TRAPPC10 and TRAPPC14. TRAPPC9, TRAPPC10 and TRAPPC14 are specific subunits of the TRAPP II complex (PubMed:31467083). Interacts with alpha-tubulin during mitosis (PubMed:30715179). Interacts with RAB3IP (via the N-terminal region); this interaction mediates RAB3IP association with the TRAPP II complex (PubMed:31467083). Interacts with TRAPPC10 (PubMed:31467083). Interacts with FBF1 (PubMed:31467083).</text>
</comment>
<comment type="interaction">
    <interactant intactId="EBI-719893">
        <id>Q8WVR3</id>
    </interactant>
    <interactant intactId="EBI-727098">
        <id>P21549</id>
        <label>AGXT</label>
    </interactant>
    <organismsDiffer>false</organismsDiffer>
    <experiments>3</experiments>
</comment>
<comment type="interaction">
    <interactant intactId="EBI-719893">
        <id>Q8WVR3</id>
    </interactant>
    <interactant intactId="EBI-3867333">
        <id>A8MQ03</id>
        <label>CYSRT1</label>
    </interactant>
    <organismsDiffer>false</organismsDiffer>
    <experiments>3</experiments>
</comment>
<comment type="interaction">
    <interactant intactId="EBI-719893">
        <id>Q8WVR3</id>
    </interactant>
    <interactant intactId="EBI-12111050">
        <id>Q3LI64</id>
        <label>KRTAP6-1</label>
    </interactant>
    <organismsDiffer>false</organismsDiffer>
    <experiments>3</experiments>
</comment>
<comment type="interaction">
    <interactant intactId="EBI-719893">
        <id>Q8WVR3</id>
    </interactant>
    <interactant intactId="EBI-22310682">
        <id>P0DPK4</id>
        <label>NOTCH2NLC</label>
    </interactant>
    <organismsDiffer>false</organismsDiffer>
    <experiments>3</experiments>
</comment>
<comment type="interaction">
    <interactant intactId="EBI-719893">
        <id>Q8WVR3</id>
    </interactant>
    <interactant intactId="EBI-2562368">
        <id>P22735</id>
        <label>TGM1</label>
    </interactant>
    <organismsDiffer>false</organismsDiffer>
    <experiments>3</experiments>
</comment>
<comment type="interaction">
    <interactant intactId="EBI-719893">
        <id>Q8WVR3</id>
    </interactant>
    <interactant intactId="EBI-11957238">
        <id>Q2TAL6</id>
        <label>VWC2</label>
    </interactant>
    <organismsDiffer>false</organismsDiffer>
    <experiments>3</experiments>
</comment>
<comment type="subcellular location">
    <subcellularLocation>
        <location evidence="4">Cytoplasm</location>
        <location evidence="4">Cytoskeleton</location>
        <location evidence="4">Spindle</location>
    </subcellularLocation>
    <subcellularLocation>
        <location evidence="4 5">Vesicle</location>
    </subcellularLocation>
    <subcellularLocation>
        <location evidence="4">Midbody</location>
    </subcellularLocation>
    <subcellularLocation>
        <location evidence="5">Cytoplasm</location>
    </subcellularLocation>
    <text evidence="4 5">During mitosis, precedes alpha-tubulin in gap formation of cell abscission at the midbody and is co-localized with PLK1 at the edges of microtubules extensions of daughter cells post cytokinesis abscission (PubMed:30715179). Colocalizes with RAB3IP on preciliary vesicles (PubMed:31467083).</text>
</comment>
<comment type="alternative products">
    <event type="alternative splicing"/>
    <isoform>
        <id>Q8WVR3-1</id>
        <name>1</name>
        <sequence type="displayed"/>
    </isoform>
    <isoform>
        <id>Q8WVR3-2</id>
        <name>2</name>
        <sequence type="described" ref="VSP_023633 VSP_023636 VSP_023637"/>
    </isoform>
    <isoform>
        <id>Q8WVR3-3</id>
        <name>3</name>
        <sequence type="described" ref="VSP_023634 VSP_023635"/>
    </isoform>
</comment>
<comment type="tissue specificity">
    <text evidence="4">Broadly expressed. High levels in brain, cerebellum, testis and whole blood.</text>
</comment>
<comment type="disease" evidence="4">
    <disease id="DI-05495">
        <name>Microcephaly 25, primary, autosomal recessive</name>
        <acronym>MCPH25</acronym>
        <description>A form of microcephaly, a disease defined as a head circumference more than 3 standard deviations below the age, sex and ethnically matched mean. Brain weight is markedly reduced and the cerebral cortex is disproportionately small. MCPH25 patients additionally manifest global developmental delay, severe intellectual disability with speech impairment, attention deficit-hyperactivity disorder, and reduced white matter and thin corpus callosum on brain imaging.</description>
        <dbReference type="MIM" id="618351"/>
    </disease>
    <text>The disease is caused by variants affecting the gene represented in this entry.</text>
</comment>
<comment type="sequence caution" evidence="9">
    <conflict type="frameshift">
        <sequence resource="EMBL-CDS" id="CAB66490"/>
    </conflict>
</comment>
<proteinExistence type="evidence at protein level"/>
<dbReference type="EMBL" id="AL136555">
    <property type="protein sequence ID" value="CAB66490.1"/>
    <property type="status" value="ALT_FRAME"/>
    <property type="molecule type" value="mRNA"/>
</dbReference>
<dbReference type="EMBL" id="AK001787">
    <property type="protein sequence ID" value="BAA91911.1"/>
    <property type="molecule type" value="mRNA"/>
</dbReference>
<dbReference type="EMBL" id="CH236956">
    <property type="protein sequence ID" value="EAL23848.1"/>
    <property type="molecule type" value="Genomic_DNA"/>
</dbReference>
<dbReference type="EMBL" id="CH471091">
    <property type="protein sequence ID" value="EAW76580.1"/>
    <property type="molecule type" value="Genomic_DNA"/>
</dbReference>
<dbReference type="EMBL" id="CH471091">
    <property type="protein sequence ID" value="EAW76582.1"/>
    <property type="molecule type" value="Genomic_DNA"/>
</dbReference>
<dbReference type="EMBL" id="BC002749">
    <property type="protein sequence ID" value="AAH02749.2"/>
    <property type="molecule type" value="mRNA"/>
</dbReference>
<dbReference type="EMBL" id="BC015722">
    <property type="protein sequence ID" value="AAH15722.2"/>
    <property type="molecule type" value="mRNA"/>
</dbReference>
<dbReference type="CCDS" id="CCDS5687.1">
    <molecule id="Q8WVR3-1"/>
</dbReference>
<dbReference type="RefSeq" id="NP_060745.3">
    <molecule id="Q8WVR3-1"/>
    <property type="nucleotide sequence ID" value="NM_018275.4"/>
</dbReference>
<dbReference type="BioGRID" id="120552">
    <property type="interactions" value="47"/>
</dbReference>
<dbReference type="CORUM" id="Q8WVR3"/>
<dbReference type="FunCoup" id="Q8WVR3">
    <property type="interactions" value="1368"/>
</dbReference>
<dbReference type="IntAct" id="Q8WVR3">
    <property type="interactions" value="32"/>
</dbReference>
<dbReference type="STRING" id="9606.ENSP00000324741"/>
<dbReference type="GlyGen" id="Q8WVR3">
    <property type="glycosylation" value="4 sites, 1 O-linked glycan (3 sites)"/>
</dbReference>
<dbReference type="iPTMnet" id="Q8WVR3"/>
<dbReference type="PhosphoSitePlus" id="Q8WVR3"/>
<dbReference type="BioMuta" id="C7orf43"/>
<dbReference type="DMDM" id="74730883"/>
<dbReference type="jPOST" id="Q8WVR3"/>
<dbReference type="MassIVE" id="Q8WVR3"/>
<dbReference type="PaxDb" id="9606-ENSP00000324741"/>
<dbReference type="PeptideAtlas" id="Q8WVR3"/>
<dbReference type="ProteomicsDB" id="74815">
    <molecule id="Q8WVR3-1"/>
</dbReference>
<dbReference type="ProteomicsDB" id="74816">
    <molecule id="Q8WVR3-2"/>
</dbReference>
<dbReference type="ProteomicsDB" id="74817">
    <molecule id="Q8WVR3-3"/>
</dbReference>
<dbReference type="Pumba" id="Q8WVR3"/>
<dbReference type="Antibodypedia" id="16406">
    <property type="antibodies" value="85 antibodies from 16 providers"/>
</dbReference>
<dbReference type="DNASU" id="55262"/>
<dbReference type="Ensembl" id="ENST00000316937.8">
    <molecule id="Q8WVR3-1"/>
    <property type="protein sequence ID" value="ENSP00000324741.3"/>
    <property type="gene ID" value="ENSG00000146826.17"/>
</dbReference>
<dbReference type="GeneID" id="55262"/>
<dbReference type="KEGG" id="hsa:55262"/>
<dbReference type="MANE-Select" id="ENST00000316937.8">
    <property type="protein sequence ID" value="ENSP00000324741.3"/>
    <property type="RefSeq nucleotide sequence ID" value="NM_018275.5"/>
    <property type="RefSeq protein sequence ID" value="NP_060745.3"/>
</dbReference>
<dbReference type="UCSC" id="uc003utr.4">
    <molecule id="Q8WVR3-1"/>
    <property type="organism name" value="human"/>
</dbReference>
<dbReference type="AGR" id="HGNC:25604"/>
<dbReference type="CTD" id="55262"/>
<dbReference type="DisGeNET" id="55262"/>
<dbReference type="GeneCards" id="TRAPPC14"/>
<dbReference type="HGNC" id="HGNC:25604">
    <property type="gene designation" value="TRAPPC14"/>
</dbReference>
<dbReference type="HPA" id="ENSG00000146826">
    <property type="expression patterns" value="Low tissue specificity"/>
</dbReference>
<dbReference type="MalaCards" id="TRAPPC14"/>
<dbReference type="MIM" id="618350">
    <property type="type" value="gene"/>
</dbReference>
<dbReference type="MIM" id="618351">
    <property type="type" value="phenotype"/>
</dbReference>
<dbReference type="neXtProt" id="NX_Q8WVR3"/>
<dbReference type="OpenTargets" id="ENSG00000146826"/>
<dbReference type="Orphanet" id="2512">
    <property type="disease" value="Autosomal recessive primary microcephaly"/>
</dbReference>
<dbReference type="VEuPathDB" id="HostDB:ENSG00000146826"/>
<dbReference type="eggNOG" id="ENOG502QSBJ">
    <property type="taxonomic scope" value="Eukaryota"/>
</dbReference>
<dbReference type="GeneTree" id="ENSGT00390000014725"/>
<dbReference type="HOGENOM" id="CLU_031637_0_0_1"/>
<dbReference type="InParanoid" id="Q8WVR3"/>
<dbReference type="OMA" id="FVMTARC"/>
<dbReference type="OrthoDB" id="6047286at2759"/>
<dbReference type="PAN-GO" id="Q8WVR3">
    <property type="GO annotations" value="3 GO annotations based on evolutionary models"/>
</dbReference>
<dbReference type="PhylomeDB" id="Q8WVR3"/>
<dbReference type="TreeFam" id="TF331500"/>
<dbReference type="PathwayCommons" id="Q8WVR3"/>
<dbReference type="SignaLink" id="Q8WVR3"/>
<dbReference type="BioGRID-ORCS" id="55262">
    <property type="hits" value="18 hits in 1141 CRISPR screens"/>
</dbReference>
<dbReference type="ChiTaRS" id="C7orf43">
    <property type="organism name" value="human"/>
</dbReference>
<dbReference type="GeneWiki" id="C7orf43"/>
<dbReference type="GenomeRNAi" id="55262"/>
<dbReference type="Pharos" id="Q8WVR3">
    <property type="development level" value="Tdark"/>
</dbReference>
<dbReference type="PRO" id="PR:Q8WVR3"/>
<dbReference type="Proteomes" id="UP000005640">
    <property type="component" value="Chromosome 7"/>
</dbReference>
<dbReference type="RNAct" id="Q8WVR3">
    <property type="molecule type" value="protein"/>
</dbReference>
<dbReference type="Bgee" id="ENSG00000146826">
    <property type="expression patterns" value="Expressed in mucosa of transverse colon and 178 other cell types or tissues"/>
</dbReference>
<dbReference type="ExpressionAtlas" id="Q8WVR3">
    <property type="expression patterns" value="baseline and differential"/>
</dbReference>
<dbReference type="GO" id="GO:0034451">
    <property type="term" value="C:centriolar satellite"/>
    <property type="evidence" value="ECO:0000314"/>
    <property type="project" value="HPA"/>
</dbReference>
<dbReference type="GO" id="GO:0043231">
    <property type="term" value="C:intracellular membrane-bounded organelle"/>
    <property type="evidence" value="ECO:0000314"/>
    <property type="project" value="HPA"/>
</dbReference>
<dbReference type="GO" id="GO:0030496">
    <property type="term" value="C:midbody"/>
    <property type="evidence" value="ECO:0000314"/>
    <property type="project" value="UniProtKB"/>
</dbReference>
<dbReference type="GO" id="GO:0072686">
    <property type="term" value="C:mitotic spindle"/>
    <property type="evidence" value="ECO:0000314"/>
    <property type="project" value="UniProtKB"/>
</dbReference>
<dbReference type="GO" id="GO:0005886">
    <property type="term" value="C:plasma membrane"/>
    <property type="evidence" value="ECO:0000314"/>
    <property type="project" value="HPA"/>
</dbReference>
<dbReference type="GO" id="GO:1990071">
    <property type="term" value="C:TRAPPII protein complex"/>
    <property type="evidence" value="ECO:0000315"/>
    <property type="project" value="UniProtKB"/>
</dbReference>
<dbReference type="GO" id="GO:0043014">
    <property type="term" value="F:alpha-tubulin binding"/>
    <property type="evidence" value="ECO:0000314"/>
    <property type="project" value="UniProtKB"/>
</dbReference>
<dbReference type="GO" id="GO:0060271">
    <property type="term" value="P:cilium assembly"/>
    <property type="evidence" value="ECO:0000315"/>
    <property type="project" value="UniProtKB"/>
</dbReference>
<dbReference type="GO" id="GO:0042127">
    <property type="term" value="P:regulation of cell population proliferation"/>
    <property type="evidence" value="ECO:0000314"/>
    <property type="project" value="UniProtKB"/>
</dbReference>
<dbReference type="InterPro" id="IPR055452">
    <property type="entry name" value="TRAPP14_C"/>
</dbReference>
<dbReference type="InterPro" id="IPR055453">
    <property type="entry name" value="TRAPP14_N"/>
</dbReference>
<dbReference type="InterPro" id="IPR031626">
    <property type="entry name" value="TRAPPC14"/>
</dbReference>
<dbReference type="PANTHER" id="PTHR16096">
    <property type="entry name" value="MICROTUBULE-ASSOCIATED PROTEIN 11"/>
    <property type="match status" value="1"/>
</dbReference>
<dbReference type="PANTHER" id="PTHR16096:SF8">
    <property type="entry name" value="TRAFFICKING PROTEIN PARTICLE COMPLEX SUBUNIT 14"/>
    <property type="match status" value="1"/>
</dbReference>
<dbReference type="Pfam" id="PF23652">
    <property type="entry name" value="TRAPP14_C"/>
    <property type="match status" value="1"/>
</dbReference>
<dbReference type="Pfam" id="PF15806">
    <property type="entry name" value="TRAPP14_N"/>
    <property type="match status" value="1"/>
</dbReference>
<organism>
    <name type="scientific">Homo sapiens</name>
    <name type="common">Human</name>
    <dbReference type="NCBI Taxonomy" id="9606"/>
    <lineage>
        <taxon>Eukaryota</taxon>
        <taxon>Metazoa</taxon>
        <taxon>Chordata</taxon>
        <taxon>Craniata</taxon>
        <taxon>Vertebrata</taxon>
        <taxon>Euteleostomi</taxon>
        <taxon>Mammalia</taxon>
        <taxon>Eutheria</taxon>
        <taxon>Euarchontoglires</taxon>
        <taxon>Primates</taxon>
        <taxon>Haplorrhini</taxon>
        <taxon>Catarrhini</taxon>
        <taxon>Hominidae</taxon>
        <taxon>Homo</taxon>
    </lineage>
</organism>
<keyword id="KW-0025">Alternative splicing</keyword>
<keyword id="KW-0970">Cilium biogenesis/degradation</keyword>
<keyword id="KW-0963">Cytoplasm</keyword>
<keyword id="KW-0206">Cytoskeleton</keyword>
<keyword id="KW-0225">Disease variant</keyword>
<keyword id="KW-0597">Phosphoprotein</keyword>
<keyword id="KW-0905">Primary microcephaly</keyword>
<keyword id="KW-1267">Proteomics identification</keyword>
<keyword id="KW-1185">Reference proteome</keyword>
<feature type="chain" id="PRO_0000280344" description="Trafficking protein particle complex subunit 14">
    <location>
        <begin position="1"/>
        <end position="580"/>
    </location>
</feature>
<feature type="region of interest" description="Disordered" evidence="2">
    <location>
        <begin position="90"/>
        <end position="138"/>
    </location>
</feature>
<feature type="region of interest" description="Disordered" evidence="2">
    <location>
        <begin position="480"/>
        <end position="533"/>
    </location>
</feature>
<feature type="compositionally biased region" description="Gly residues" evidence="2">
    <location>
        <begin position="105"/>
        <end position="116"/>
    </location>
</feature>
<feature type="compositionally biased region" description="Low complexity" evidence="2">
    <location>
        <begin position="124"/>
        <end position="137"/>
    </location>
</feature>
<feature type="compositionally biased region" description="Low complexity" evidence="2">
    <location>
        <begin position="492"/>
        <end position="502"/>
    </location>
</feature>
<feature type="compositionally biased region" description="Polar residues" evidence="2">
    <location>
        <begin position="512"/>
        <end position="525"/>
    </location>
</feature>
<feature type="modified residue" description="Phosphoserine" evidence="12">
    <location>
        <position position="491"/>
    </location>
</feature>
<feature type="modified residue" description="Phosphoserine" evidence="11 12">
    <location>
        <position position="517"/>
    </location>
</feature>
<feature type="modified residue" description="Phosphothreonine" evidence="11">
    <location>
        <position position="541"/>
    </location>
</feature>
<feature type="modified residue" description="Phosphoserine" evidence="11">
    <location>
        <position position="546"/>
    </location>
</feature>
<feature type="splice variant" id="VSP_023633" description="In isoform 2." evidence="7">
    <location>
        <begin position="1"/>
        <end position="378"/>
    </location>
</feature>
<feature type="splice variant" id="VSP_023634" description="In isoform 3." evidence="6">
    <location>
        <begin position="1"/>
        <end position="374"/>
    </location>
</feature>
<feature type="splice variant" id="VSP_023635" description="In isoform 3." evidence="6">
    <original>SCKSPVRTYERFTVTYTLLNNLQDFLAVRLVWTPEHAQA</original>
    <variation>MHRLFTPQSGFENQMRLCWRRPCGNEERCSVCWSLFLPP</variation>
    <location>
        <begin position="375"/>
        <end position="413"/>
    </location>
</feature>
<feature type="splice variant" id="VSP_023636" description="In isoform 2." evidence="7">
    <original>PVRTYERFTVTYTLLNNLQDFLAVRLVWTPEHAQA</original>
    <variation>MHRLSGFENQMRLCWRRPCGNEERCSVCWSLFLPP</variation>
    <location>
        <begin position="379"/>
        <end position="413"/>
    </location>
</feature>
<feature type="splice variant" id="VSP_023637" description="In isoform 2." evidence="7">
    <location>
        <begin position="466"/>
        <end position="468"/>
    </location>
</feature>
<feature type="sequence variant" id="VAR_081463" description="In MCPH25." evidence="4">
    <location>
        <begin position="205"/>
        <end position="580"/>
    </location>
</feature>
<feature type="sequence variant" id="VAR_050817" description="In dbSNP:rs2293477.">
    <original>R</original>
    <variation>H</variation>
    <location>
        <position position="295"/>
    </location>
</feature>
<feature type="sequence conflict" description="In Ref. 1; CAB66490." evidence="9" ref="1">
    <original>S</original>
    <variation>R</variation>
    <location>
        <position position="497"/>
    </location>
</feature>